<organism>
    <name type="scientific">Parabacteroides distasonis (strain ATCC 8503 / DSM 20701 / CIP 104284 / JCM 5825 / NCTC 11152)</name>
    <dbReference type="NCBI Taxonomy" id="435591"/>
    <lineage>
        <taxon>Bacteria</taxon>
        <taxon>Pseudomonadati</taxon>
        <taxon>Bacteroidota</taxon>
        <taxon>Bacteroidia</taxon>
        <taxon>Bacteroidales</taxon>
        <taxon>Tannerellaceae</taxon>
        <taxon>Parabacteroides</taxon>
    </lineage>
</organism>
<sequence>MDTIIKTQIIDLIHREVIPAIGCTEPIAVALAAAKAAEVLGRKPEKIEVYLSANILKNAMGVGIPGTGMVGLPIAIALGSIIGKSAYGLEVLKDLTSEGLKEGKEMVCKKCIGIDLKENVDKLYIEIISSAGNDRSRVIICHEHTHIIYVEKNGEVLTDLRTANASGEEVCENKDLRLSFSMVYEFAMEMPLDEIRFILETAELNKKAAQASMKGNYGHTVSKTVSGAFGRKFMGDSAYTHMLIMTSAACDARMDGAMIPVMSNSGSGNQGIAATLPVLSFAEDIQCSEEQLIRALMLSHLMVIYIKQSLGRLSALCGCVVAATGASCAITYLMGGNKARISYAIKNMIGNITGMICDGAKPSCAMKVSSGVSTAMLSALMAMEDKVVTSVEGIIDEDVDKSIANLTAIGSKGMEATDRLVLDIMTGKSC</sequence>
<comment type="similarity">
    <text evidence="1">Belongs to the UPF0597 family.</text>
</comment>
<keyword id="KW-1185">Reference proteome</keyword>
<protein>
    <recommendedName>
        <fullName evidence="1">UPF0597 protein BDI_1130</fullName>
    </recommendedName>
</protein>
<dbReference type="EMBL" id="CP000140">
    <property type="protein sequence ID" value="ABR42893.1"/>
    <property type="molecule type" value="Genomic_DNA"/>
</dbReference>
<dbReference type="RefSeq" id="WP_008779903.1">
    <property type="nucleotide sequence ID" value="NC_009615.1"/>
</dbReference>
<dbReference type="STRING" id="435591.BDI_1130"/>
<dbReference type="PaxDb" id="435591-BDI_1130"/>
<dbReference type="KEGG" id="pdi:BDI_1130"/>
<dbReference type="eggNOG" id="COG3681">
    <property type="taxonomic scope" value="Bacteria"/>
</dbReference>
<dbReference type="HOGENOM" id="CLU_051840_0_0_10"/>
<dbReference type="BioCyc" id="PDIS435591:G1G5A-1165-MONOMER"/>
<dbReference type="Proteomes" id="UP000000566">
    <property type="component" value="Chromosome"/>
</dbReference>
<dbReference type="GO" id="GO:0080146">
    <property type="term" value="F:L-cysteine desulfhydrase activity"/>
    <property type="evidence" value="ECO:0007669"/>
    <property type="project" value="TreeGrafter"/>
</dbReference>
<dbReference type="GO" id="GO:0019450">
    <property type="term" value="P:L-cysteine catabolic process to pyruvate"/>
    <property type="evidence" value="ECO:0007669"/>
    <property type="project" value="TreeGrafter"/>
</dbReference>
<dbReference type="HAMAP" id="MF_01845">
    <property type="entry name" value="UPF0597"/>
    <property type="match status" value="1"/>
</dbReference>
<dbReference type="InterPro" id="IPR005130">
    <property type="entry name" value="Ser_deHydtase-like_asu"/>
</dbReference>
<dbReference type="InterPro" id="IPR021144">
    <property type="entry name" value="UPF0597"/>
</dbReference>
<dbReference type="PANTHER" id="PTHR30501">
    <property type="entry name" value="UPF0597 PROTEIN YHAM"/>
    <property type="match status" value="1"/>
</dbReference>
<dbReference type="PANTHER" id="PTHR30501:SF2">
    <property type="entry name" value="UPF0597 PROTEIN YHAM"/>
    <property type="match status" value="1"/>
</dbReference>
<dbReference type="Pfam" id="PF03313">
    <property type="entry name" value="SDH_alpha"/>
    <property type="match status" value="1"/>
</dbReference>
<dbReference type="PIRSF" id="PIRSF006054">
    <property type="entry name" value="UCP006054"/>
    <property type="match status" value="1"/>
</dbReference>
<name>Y1130_PARD8</name>
<feature type="chain" id="PRO_0000339834" description="UPF0597 protein BDI_1130">
    <location>
        <begin position="1"/>
        <end position="430"/>
    </location>
</feature>
<proteinExistence type="inferred from homology"/>
<evidence type="ECO:0000255" key="1">
    <source>
        <dbReference type="HAMAP-Rule" id="MF_01845"/>
    </source>
</evidence>
<reference key="1">
    <citation type="journal article" date="2007" name="PLoS Biol.">
        <title>Evolution of symbiotic bacteria in the distal human intestine.</title>
        <authorList>
            <person name="Xu J."/>
            <person name="Mahowald M.A."/>
            <person name="Ley R.E."/>
            <person name="Lozupone C.A."/>
            <person name="Hamady M."/>
            <person name="Martens E.C."/>
            <person name="Henrissat B."/>
            <person name="Coutinho P.M."/>
            <person name="Minx P."/>
            <person name="Latreille P."/>
            <person name="Cordum H."/>
            <person name="Van Brunt A."/>
            <person name="Kim K."/>
            <person name="Fulton R.S."/>
            <person name="Fulton L.A."/>
            <person name="Clifton S.W."/>
            <person name="Wilson R.K."/>
            <person name="Knight R.D."/>
            <person name="Gordon J.I."/>
        </authorList>
    </citation>
    <scope>NUCLEOTIDE SEQUENCE [LARGE SCALE GENOMIC DNA]</scope>
    <source>
        <strain>ATCC 8503 / DSM 20701 / CIP 104284 / JCM 5825 / NCTC 11152</strain>
    </source>
</reference>
<gene>
    <name type="ordered locus">BDI_1130</name>
</gene>
<accession>A6LB29</accession>